<name>SIGS_STAAW</name>
<organism>
    <name type="scientific">Staphylococcus aureus (strain MW2)</name>
    <dbReference type="NCBI Taxonomy" id="196620"/>
    <lineage>
        <taxon>Bacteria</taxon>
        <taxon>Bacillati</taxon>
        <taxon>Bacillota</taxon>
        <taxon>Bacilli</taxon>
        <taxon>Bacillales</taxon>
        <taxon>Staphylococcaceae</taxon>
        <taxon>Staphylococcus</taxon>
    </lineage>
</organism>
<gene>
    <name type="primary">sigS</name>
    <name type="ordered locus">MW1717</name>
</gene>
<feature type="chain" id="PRO_0000367452" description="RNA polymerase sigma factor SigS">
    <location>
        <begin position="1"/>
        <end position="156"/>
    </location>
</feature>
<feature type="DNA-binding region" description="H-T-H motif" evidence="1">
    <location>
        <begin position="126"/>
        <end position="145"/>
    </location>
</feature>
<feature type="short sequence motif" description="Polymerase core binding">
    <location>
        <begin position="29"/>
        <end position="44"/>
    </location>
</feature>
<reference key="1">
    <citation type="journal article" date="2002" name="Lancet">
        <title>Genome and virulence determinants of high virulence community-acquired MRSA.</title>
        <authorList>
            <person name="Baba T."/>
            <person name="Takeuchi F."/>
            <person name="Kuroda M."/>
            <person name="Yuzawa H."/>
            <person name="Aoki K."/>
            <person name="Oguchi A."/>
            <person name="Nagai Y."/>
            <person name="Iwama N."/>
            <person name="Asano K."/>
            <person name="Naimi T."/>
            <person name="Kuroda H."/>
            <person name="Cui L."/>
            <person name="Yamamoto K."/>
            <person name="Hiramatsu K."/>
        </authorList>
    </citation>
    <scope>NUCLEOTIDE SEQUENCE [LARGE SCALE GENOMIC DNA]</scope>
    <source>
        <strain>MW2</strain>
    </source>
</reference>
<comment type="function">
    <text evidence="1">Sigma factors are initiation factors that promote the attachment of RNA polymerase to specific initiation sites and are then released. Sigma-S contributes to the protection against external stress, thus playing a role in cellular fitness and survival (By similarity).</text>
</comment>
<comment type="similarity">
    <text evidence="2">Belongs to the sigma-70 factor family.</text>
</comment>
<accession>Q8NW08</accession>
<protein>
    <recommendedName>
        <fullName>RNA polymerase sigma factor SigS</fullName>
    </recommendedName>
</protein>
<evidence type="ECO:0000250" key="1"/>
<evidence type="ECO:0000305" key="2"/>
<sequence length="156" mass="19136">MKFNDVYNKHHKIIHHLLKKYNISYNYDEYYQLLLIKMWQLSQIYKPSSKQSLSSFLFTRLNFYLIDLFRQQNQLKDVILCENNSPTLTEQPTYFNEHDLRLQDIFKLLNQRERLWLKLYLEGYKQFEIAEIMSLSLSTIKLIKMSVKRKCQHNFN</sequence>
<keyword id="KW-0238">DNA-binding</keyword>
<keyword id="KW-0731">Sigma factor</keyword>
<keyword id="KW-0804">Transcription</keyword>
<keyword id="KW-0805">Transcription regulation</keyword>
<proteinExistence type="inferred from homology"/>
<dbReference type="EMBL" id="BA000033">
    <property type="protein sequence ID" value="BAB95582.1"/>
    <property type="molecule type" value="Genomic_DNA"/>
</dbReference>
<dbReference type="RefSeq" id="WP_000671052.1">
    <property type="nucleotide sequence ID" value="NC_003923.1"/>
</dbReference>
<dbReference type="SMR" id="Q8NW08"/>
<dbReference type="KEGG" id="sam:MW1717"/>
<dbReference type="HOGENOM" id="CLU_047691_20_2_9"/>
<dbReference type="GO" id="GO:0003677">
    <property type="term" value="F:DNA binding"/>
    <property type="evidence" value="ECO:0007669"/>
    <property type="project" value="UniProtKB-KW"/>
</dbReference>
<dbReference type="GO" id="GO:0016987">
    <property type="term" value="F:sigma factor activity"/>
    <property type="evidence" value="ECO:0007669"/>
    <property type="project" value="UniProtKB-KW"/>
</dbReference>
<dbReference type="GO" id="GO:0006352">
    <property type="term" value="P:DNA-templated transcription initiation"/>
    <property type="evidence" value="ECO:0007669"/>
    <property type="project" value="InterPro"/>
</dbReference>
<dbReference type="Gene3D" id="1.10.10.10">
    <property type="entry name" value="Winged helix-like DNA-binding domain superfamily/Winged helix DNA-binding domain"/>
    <property type="match status" value="1"/>
</dbReference>
<dbReference type="InterPro" id="IPR014284">
    <property type="entry name" value="RNA_pol_sigma-70_dom"/>
</dbReference>
<dbReference type="InterPro" id="IPR007627">
    <property type="entry name" value="RNA_pol_sigma70_r2"/>
</dbReference>
<dbReference type="InterPro" id="IPR013325">
    <property type="entry name" value="RNA_pol_sigma_r2"/>
</dbReference>
<dbReference type="InterPro" id="IPR016032">
    <property type="entry name" value="Sig_transdc_resp-reg_C-effctor"/>
</dbReference>
<dbReference type="InterPro" id="IPR036388">
    <property type="entry name" value="WH-like_DNA-bd_sf"/>
</dbReference>
<dbReference type="NCBIfam" id="TIGR02937">
    <property type="entry name" value="sigma70-ECF"/>
    <property type="match status" value="1"/>
</dbReference>
<dbReference type="Pfam" id="PF04542">
    <property type="entry name" value="Sigma70_r2"/>
    <property type="match status" value="1"/>
</dbReference>
<dbReference type="SUPFAM" id="SSF46894">
    <property type="entry name" value="C-terminal effector domain of the bipartite response regulators"/>
    <property type="match status" value="1"/>
</dbReference>
<dbReference type="SUPFAM" id="SSF88946">
    <property type="entry name" value="Sigma2 domain of RNA polymerase sigma factors"/>
    <property type="match status" value="1"/>
</dbReference>